<proteinExistence type="inferred from homology"/>
<reference key="1">
    <citation type="journal article" date="2009" name="J. Bacteriol.">
        <title>Genome sequences of three Agrobacterium biovars help elucidate the evolution of multichromosome genomes in bacteria.</title>
        <authorList>
            <person name="Slater S.C."/>
            <person name="Goldman B.S."/>
            <person name="Goodner B."/>
            <person name="Setubal J.C."/>
            <person name="Farrand S.K."/>
            <person name="Nester E.W."/>
            <person name="Burr T.J."/>
            <person name="Banta L."/>
            <person name="Dickerman A.W."/>
            <person name="Paulsen I."/>
            <person name="Otten L."/>
            <person name="Suen G."/>
            <person name="Welch R."/>
            <person name="Almeida N.F."/>
            <person name="Arnold F."/>
            <person name="Burton O.T."/>
            <person name="Du Z."/>
            <person name="Ewing A."/>
            <person name="Godsy E."/>
            <person name="Heisel S."/>
            <person name="Houmiel K.L."/>
            <person name="Jhaveri J."/>
            <person name="Lu J."/>
            <person name="Miller N.M."/>
            <person name="Norton S."/>
            <person name="Chen Q."/>
            <person name="Phoolcharoen W."/>
            <person name="Ohlin V."/>
            <person name="Ondrusek D."/>
            <person name="Pride N."/>
            <person name="Stricklin S.L."/>
            <person name="Sun J."/>
            <person name="Wheeler C."/>
            <person name="Wilson L."/>
            <person name="Zhu H."/>
            <person name="Wood D.W."/>
        </authorList>
    </citation>
    <scope>NUCLEOTIDE SEQUENCE [LARGE SCALE GENOMIC DNA]</scope>
    <source>
        <strain>K84 / ATCC BAA-868</strain>
    </source>
</reference>
<name>HUTH_RHIR8</name>
<accession>B9JDC0</accession>
<gene>
    <name evidence="1" type="primary">hutH</name>
    <name type="ordered locus">Arad_4563</name>
</gene>
<keyword id="KW-0963">Cytoplasm</keyword>
<keyword id="KW-0369">Histidine metabolism</keyword>
<keyword id="KW-0456">Lyase</keyword>
<comment type="catalytic activity">
    <reaction evidence="1">
        <text>L-histidine = trans-urocanate + NH4(+)</text>
        <dbReference type="Rhea" id="RHEA:21232"/>
        <dbReference type="ChEBI" id="CHEBI:17771"/>
        <dbReference type="ChEBI" id="CHEBI:28938"/>
        <dbReference type="ChEBI" id="CHEBI:57595"/>
        <dbReference type="EC" id="4.3.1.3"/>
    </reaction>
</comment>
<comment type="pathway">
    <text evidence="1">Amino-acid degradation; L-histidine degradation into L-glutamate; N-formimidoyl-L-glutamate from L-histidine: step 1/3.</text>
</comment>
<comment type="subcellular location">
    <subcellularLocation>
        <location evidence="1">Cytoplasm</location>
    </subcellularLocation>
</comment>
<comment type="PTM">
    <text evidence="1">Contains an active site 4-methylidene-imidazol-5-one (MIO), which is formed autocatalytically by cyclization and dehydration of residues Ala-Ser-Gly.</text>
</comment>
<comment type="similarity">
    <text evidence="1">Belongs to the PAL/histidase family.</text>
</comment>
<dbReference type="EC" id="4.3.1.3" evidence="1"/>
<dbReference type="EMBL" id="CP000628">
    <property type="protein sequence ID" value="ACM28249.1"/>
    <property type="molecule type" value="Genomic_DNA"/>
</dbReference>
<dbReference type="RefSeq" id="WP_012652803.1">
    <property type="nucleotide sequence ID" value="NC_011985.1"/>
</dbReference>
<dbReference type="SMR" id="B9JDC0"/>
<dbReference type="STRING" id="311403.Arad_4563"/>
<dbReference type="KEGG" id="ara:Arad_4563"/>
<dbReference type="eggNOG" id="COG2986">
    <property type="taxonomic scope" value="Bacteria"/>
</dbReference>
<dbReference type="HOGENOM" id="CLU_014801_4_0_5"/>
<dbReference type="UniPathway" id="UPA00379">
    <property type="reaction ID" value="UER00549"/>
</dbReference>
<dbReference type="Proteomes" id="UP000001600">
    <property type="component" value="Chromosome 1"/>
</dbReference>
<dbReference type="GO" id="GO:0005737">
    <property type="term" value="C:cytoplasm"/>
    <property type="evidence" value="ECO:0007669"/>
    <property type="project" value="UniProtKB-SubCell"/>
</dbReference>
<dbReference type="GO" id="GO:0004397">
    <property type="term" value="F:histidine ammonia-lyase activity"/>
    <property type="evidence" value="ECO:0007669"/>
    <property type="project" value="UniProtKB-UniRule"/>
</dbReference>
<dbReference type="GO" id="GO:0019556">
    <property type="term" value="P:L-histidine catabolic process to glutamate and formamide"/>
    <property type="evidence" value="ECO:0007669"/>
    <property type="project" value="UniProtKB-UniPathway"/>
</dbReference>
<dbReference type="GO" id="GO:0019557">
    <property type="term" value="P:L-histidine catabolic process to glutamate and formate"/>
    <property type="evidence" value="ECO:0007669"/>
    <property type="project" value="UniProtKB-UniPathway"/>
</dbReference>
<dbReference type="CDD" id="cd00332">
    <property type="entry name" value="PAL-HAL"/>
    <property type="match status" value="1"/>
</dbReference>
<dbReference type="FunFam" id="1.10.275.10:FF:000005">
    <property type="entry name" value="Histidine ammonia-lyase"/>
    <property type="match status" value="1"/>
</dbReference>
<dbReference type="FunFam" id="1.20.200.10:FF:000003">
    <property type="entry name" value="Histidine ammonia-lyase"/>
    <property type="match status" value="1"/>
</dbReference>
<dbReference type="Gene3D" id="1.20.200.10">
    <property type="entry name" value="Fumarase/aspartase (Central domain)"/>
    <property type="match status" value="1"/>
</dbReference>
<dbReference type="Gene3D" id="1.10.275.10">
    <property type="entry name" value="Fumarase/aspartase (N-terminal domain)"/>
    <property type="match status" value="1"/>
</dbReference>
<dbReference type="HAMAP" id="MF_00229">
    <property type="entry name" value="His_ammonia_lyase"/>
    <property type="match status" value="1"/>
</dbReference>
<dbReference type="InterPro" id="IPR001106">
    <property type="entry name" value="Aromatic_Lyase"/>
</dbReference>
<dbReference type="InterPro" id="IPR024083">
    <property type="entry name" value="Fumarase/histidase_N"/>
</dbReference>
<dbReference type="InterPro" id="IPR005921">
    <property type="entry name" value="HutH"/>
</dbReference>
<dbReference type="InterPro" id="IPR008948">
    <property type="entry name" value="L-Aspartase-like"/>
</dbReference>
<dbReference type="InterPro" id="IPR022313">
    <property type="entry name" value="Phe/His_NH3-lyase_AS"/>
</dbReference>
<dbReference type="NCBIfam" id="TIGR01225">
    <property type="entry name" value="hutH"/>
    <property type="match status" value="1"/>
</dbReference>
<dbReference type="NCBIfam" id="NF006871">
    <property type="entry name" value="PRK09367.1"/>
    <property type="match status" value="1"/>
</dbReference>
<dbReference type="PANTHER" id="PTHR10362">
    <property type="entry name" value="HISTIDINE AMMONIA-LYASE"/>
    <property type="match status" value="1"/>
</dbReference>
<dbReference type="Pfam" id="PF00221">
    <property type="entry name" value="Lyase_aromatic"/>
    <property type="match status" value="1"/>
</dbReference>
<dbReference type="SUPFAM" id="SSF48557">
    <property type="entry name" value="L-aspartase-like"/>
    <property type="match status" value="1"/>
</dbReference>
<dbReference type="PROSITE" id="PS00488">
    <property type="entry name" value="PAL_HISTIDASE"/>
    <property type="match status" value="1"/>
</dbReference>
<evidence type="ECO:0000255" key="1">
    <source>
        <dbReference type="HAMAP-Rule" id="MF_00229"/>
    </source>
</evidence>
<feature type="chain" id="PRO_1000125084" description="Histidine ammonia-lyase">
    <location>
        <begin position="1"/>
        <end position="511"/>
    </location>
</feature>
<feature type="modified residue" description="2,3-didehydroalanine (Ser)" evidence="1">
    <location>
        <position position="143"/>
    </location>
</feature>
<feature type="cross-link" description="5-imidazolinone (Ala-Gly)" evidence="1">
    <location>
        <begin position="142"/>
        <end position="144"/>
    </location>
</feature>
<sequence>MTITLHPGSVSLKQLAEIYWSGEPAKLDASFDAGILKAAARIAEIAAGNAPVYGINTGFGKLASIKIDSADVATLQRNLILSHCCGVGQPLPENVVRLIMSLKLVSLGRGASGVRLELVRLIEGMLAKGVVPVIPEKGSVGASGDLAPLAHMTAVMMGHGEAFYAGERLDGAAALEKAGLTPVVLAAKEGLALINGTQVSTALALAGLFRAHRAAQAALITGAMSTDAAMGSSAPFHPDIHTLRGHQGQIDTAAALRGLLAGSVIRESHIEGDERVQDPYCIRCQPQVDGACLDLLRSVGRTLEIEANAVTDNPLVLSDNSVVSGGNFHAEPVAFAADQIAIAVCEIGAISQRRIALLVDPALSYGLPAFLAKKPGLNSGLMIAEVTSAALMSENKQMSHPASVDSTPTSANQEDHVSMACHGARRLLQMTDNLFGIVGIEALTAAQGVEFRAPLATSPELTLAIATIRSVVPTLDVDRYMANDLKAASDLVASGALNASVSADILPSLEI</sequence>
<organism>
    <name type="scientific">Rhizobium rhizogenes (strain K84 / ATCC BAA-868)</name>
    <name type="common">Agrobacterium radiobacter</name>
    <dbReference type="NCBI Taxonomy" id="311403"/>
    <lineage>
        <taxon>Bacteria</taxon>
        <taxon>Pseudomonadati</taxon>
        <taxon>Pseudomonadota</taxon>
        <taxon>Alphaproteobacteria</taxon>
        <taxon>Hyphomicrobiales</taxon>
        <taxon>Rhizobiaceae</taxon>
        <taxon>Rhizobium/Agrobacterium group</taxon>
        <taxon>Rhizobium</taxon>
    </lineage>
</organism>
<protein>
    <recommendedName>
        <fullName evidence="1">Histidine ammonia-lyase</fullName>
        <shortName evidence="1">Histidase</shortName>
        <ecNumber evidence="1">4.3.1.3</ecNumber>
    </recommendedName>
</protein>